<organism>
    <name type="scientific">Heyndrickxia coagulans</name>
    <name type="common">Weizmannia coagulans</name>
    <dbReference type="NCBI Taxonomy" id="1398"/>
    <lineage>
        <taxon>Bacteria</taxon>
        <taxon>Bacillati</taxon>
        <taxon>Bacillota</taxon>
        <taxon>Bacilli</taxon>
        <taxon>Bacillales</taxon>
        <taxon>Bacillaceae</taxon>
        <taxon>Heyndrickxia</taxon>
    </lineage>
</organism>
<sequence>MAVKVGINGFGRIGRNVFRAAVKNPDIEVVAVNDLTANADGLAHLLKYDSVHGRLDAEVVVNDGVSVNGKEIIVKAERNPENLAWGEIGVDIVVESTGRFTKREDAAKHLEAGAKKVIISAPAKVENITVVMGVNQDKYDADAHHVISNASCTTICLAAFARVLHQIFGEVSRMMTTAHSYTNIQRILDAATHADLRGARAAAESIIDTTNGAAMAVALVLPELKGKLNGMAMRVATANVSVVDLVYELAKEVTVEEVNAALKAIAEGELKGILAYSIEPLVIRNYNGSTVSSTIDILSTMVIDGAMVKVVSWYDNETGYSHRVVALAAYINAKGL</sequence>
<gene>
    <name type="primary">gap</name>
</gene>
<evidence type="ECO:0000250" key="1">
    <source>
        <dbReference type="UniProtKB" id="P00362"/>
    </source>
</evidence>
<evidence type="ECO:0000250" key="2">
    <source>
        <dbReference type="UniProtKB" id="P09124"/>
    </source>
</evidence>
<evidence type="ECO:0000250" key="3">
    <source>
        <dbReference type="UniProtKB" id="Q6GIL8"/>
    </source>
</evidence>
<evidence type="ECO:0000305" key="4"/>
<dbReference type="EC" id="1.2.1.12" evidence="2"/>
<dbReference type="SMR" id="P15115"/>
<dbReference type="UniPathway" id="UPA00109">
    <property type="reaction ID" value="UER00184"/>
</dbReference>
<dbReference type="GO" id="GO:0005737">
    <property type="term" value="C:cytoplasm"/>
    <property type="evidence" value="ECO:0007669"/>
    <property type="project" value="UniProtKB-SubCell"/>
</dbReference>
<dbReference type="GO" id="GO:0004365">
    <property type="term" value="F:glyceraldehyde-3-phosphate dehydrogenase (NAD+) (phosphorylating) activity"/>
    <property type="evidence" value="ECO:0000250"/>
    <property type="project" value="UniProtKB"/>
</dbReference>
<dbReference type="GO" id="GO:0051287">
    <property type="term" value="F:NAD binding"/>
    <property type="evidence" value="ECO:0000250"/>
    <property type="project" value="UniProtKB"/>
</dbReference>
<dbReference type="GO" id="GO:0050661">
    <property type="term" value="F:NADP binding"/>
    <property type="evidence" value="ECO:0007669"/>
    <property type="project" value="InterPro"/>
</dbReference>
<dbReference type="GO" id="GO:0006006">
    <property type="term" value="P:glucose metabolic process"/>
    <property type="evidence" value="ECO:0007669"/>
    <property type="project" value="InterPro"/>
</dbReference>
<dbReference type="GO" id="GO:0006096">
    <property type="term" value="P:glycolytic process"/>
    <property type="evidence" value="ECO:0007669"/>
    <property type="project" value="UniProtKB-UniPathway"/>
</dbReference>
<dbReference type="CDD" id="cd18126">
    <property type="entry name" value="GAPDH_I_C"/>
    <property type="match status" value="1"/>
</dbReference>
<dbReference type="CDD" id="cd05214">
    <property type="entry name" value="GAPDH_I_N"/>
    <property type="match status" value="1"/>
</dbReference>
<dbReference type="FunFam" id="3.30.360.10:FF:000002">
    <property type="entry name" value="Glyceraldehyde-3-phosphate dehydrogenase"/>
    <property type="match status" value="1"/>
</dbReference>
<dbReference type="FunFam" id="3.40.50.720:FF:000001">
    <property type="entry name" value="Glyceraldehyde-3-phosphate dehydrogenase"/>
    <property type="match status" value="1"/>
</dbReference>
<dbReference type="Gene3D" id="3.30.360.10">
    <property type="entry name" value="Dihydrodipicolinate Reductase, domain 2"/>
    <property type="match status" value="1"/>
</dbReference>
<dbReference type="Gene3D" id="3.40.50.720">
    <property type="entry name" value="NAD(P)-binding Rossmann-like Domain"/>
    <property type="match status" value="1"/>
</dbReference>
<dbReference type="InterPro" id="IPR020831">
    <property type="entry name" value="GlycerAld/Erythrose_P_DH"/>
</dbReference>
<dbReference type="InterPro" id="IPR020830">
    <property type="entry name" value="GlycerAld_3-P_DH_AS"/>
</dbReference>
<dbReference type="InterPro" id="IPR020829">
    <property type="entry name" value="GlycerAld_3-P_DH_cat"/>
</dbReference>
<dbReference type="InterPro" id="IPR020828">
    <property type="entry name" value="GlycerAld_3-P_DH_NAD(P)-bd"/>
</dbReference>
<dbReference type="InterPro" id="IPR006424">
    <property type="entry name" value="Glyceraldehyde-3-P_DH_1"/>
</dbReference>
<dbReference type="InterPro" id="IPR036291">
    <property type="entry name" value="NAD(P)-bd_dom_sf"/>
</dbReference>
<dbReference type="NCBIfam" id="TIGR01534">
    <property type="entry name" value="GAPDH-I"/>
    <property type="match status" value="1"/>
</dbReference>
<dbReference type="PANTHER" id="PTHR43148">
    <property type="entry name" value="GLYCERALDEHYDE-3-PHOSPHATE DEHYDROGENASE 2"/>
    <property type="match status" value="1"/>
</dbReference>
<dbReference type="Pfam" id="PF02800">
    <property type="entry name" value="Gp_dh_C"/>
    <property type="match status" value="1"/>
</dbReference>
<dbReference type="Pfam" id="PF00044">
    <property type="entry name" value="Gp_dh_N"/>
    <property type="match status" value="1"/>
</dbReference>
<dbReference type="PIRSF" id="PIRSF000149">
    <property type="entry name" value="GAP_DH"/>
    <property type="match status" value="1"/>
</dbReference>
<dbReference type="PRINTS" id="PR00078">
    <property type="entry name" value="G3PDHDRGNASE"/>
</dbReference>
<dbReference type="SMART" id="SM00846">
    <property type="entry name" value="Gp_dh_N"/>
    <property type="match status" value="1"/>
</dbReference>
<dbReference type="SUPFAM" id="SSF55347">
    <property type="entry name" value="Glyceraldehyde-3-phosphate dehydrogenase-like, C-terminal domain"/>
    <property type="match status" value="1"/>
</dbReference>
<dbReference type="SUPFAM" id="SSF51735">
    <property type="entry name" value="NAD(P)-binding Rossmann-fold domains"/>
    <property type="match status" value="1"/>
</dbReference>
<dbReference type="PROSITE" id="PS00071">
    <property type="entry name" value="GAPDH"/>
    <property type="match status" value="1"/>
</dbReference>
<name>G3P_HEYCO</name>
<reference key="1">
    <citation type="journal article" date="1989" name="Gene">
        <title>Nucleotide sequences of genes encoding heat-stable and heat-labile glyceraldehyde-3-phosphate dehydrogenases; amino acid sequence and protein thermostability.</title>
        <authorList>
            <person name="Tesfay H.S."/>
            <person name="Amelunxen R.E."/>
            <person name="Goldberg I.D."/>
        </authorList>
    </citation>
    <scope>NUCLEOTIDE SEQUENCE [GENOMIC DNA]</scope>
    <scope>RETRACTED PAPER</scope>
</reference>
<reference key="2">
    <citation type="journal article" date="1990" name="Gene">
        <authorList>
            <person name="Tesfay H.S."/>
            <person name="Amelunxen R.E."/>
            <person name="Goldberg I.D."/>
        </authorList>
    </citation>
    <scope>ERRATUM OF PUBMED:2684782</scope>
    <scope>RETRACTION NOTICE OF PUBMED:2684782</scope>
</reference>
<reference key="3">
    <citation type="journal article" date="1981" name="J. Bacteriol.">
        <title>Sequence homology in the amino-terminal and active-site regions of thermolabile glyceraldehyde-3-phosphate dehydrogenase from a thermophile.</title>
        <authorList>
            <person name="Crabb J.W."/>
            <person name="Murdock A.L."/>
            <person name="Suzuki T."/>
            <person name="Hamilton J.W."/>
            <person name="McLinden H."/>
            <person name="Amelunxen R.E."/>
        </authorList>
    </citation>
    <scope>PRELIMINARY PROTEIN SEQUENCE OF 2-29 AND 131-170</scope>
</reference>
<feature type="initiator methionine" description="Removed">
    <location>
        <position position="1"/>
    </location>
</feature>
<feature type="chain" id="PRO_0000145630" description="Glyceraldehyde-3-phosphate dehydrogenase">
    <location>
        <begin position="2"/>
        <end position="336"/>
    </location>
</feature>
<feature type="active site" description="Nucleophile" evidence="1">
    <location>
        <position position="152"/>
    </location>
</feature>
<feature type="binding site" evidence="1">
    <location>
        <begin position="12"/>
        <end position="13"/>
    </location>
    <ligand>
        <name>NAD(+)</name>
        <dbReference type="ChEBI" id="CHEBI:57540"/>
    </ligand>
</feature>
<feature type="binding site" evidence="1">
    <location>
        <position position="34"/>
    </location>
    <ligand>
        <name>NAD(+)</name>
        <dbReference type="ChEBI" id="CHEBI:57540"/>
    </ligand>
</feature>
<feature type="binding site" evidence="1">
    <location>
        <position position="78"/>
    </location>
    <ligand>
        <name>NAD(+)</name>
        <dbReference type="ChEBI" id="CHEBI:57540"/>
    </ligand>
</feature>
<feature type="binding site" evidence="1">
    <location>
        <position position="120"/>
    </location>
    <ligand>
        <name>NAD(+)</name>
        <dbReference type="ChEBI" id="CHEBI:57540"/>
    </ligand>
</feature>
<feature type="binding site" evidence="1">
    <location>
        <begin position="151"/>
        <end position="153"/>
    </location>
    <ligand>
        <name>D-glyceraldehyde 3-phosphate</name>
        <dbReference type="ChEBI" id="CHEBI:59776"/>
    </ligand>
</feature>
<feature type="binding site" evidence="1">
    <location>
        <position position="182"/>
    </location>
    <ligand>
        <name>D-glyceraldehyde 3-phosphate</name>
        <dbReference type="ChEBI" id="CHEBI:59776"/>
    </ligand>
</feature>
<feature type="binding site" evidence="1">
    <location>
        <position position="183"/>
    </location>
    <ligand>
        <name>NAD(+)</name>
        <dbReference type="ChEBI" id="CHEBI:57540"/>
    </ligand>
</feature>
<feature type="binding site" evidence="1">
    <location>
        <begin position="211"/>
        <end position="212"/>
    </location>
    <ligand>
        <name>D-glyceraldehyde 3-phosphate</name>
        <dbReference type="ChEBI" id="CHEBI:59776"/>
    </ligand>
</feature>
<feature type="binding site" evidence="1">
    <location>
        <position position="234"/>
    </location>
    <ligand>
        <name>D-glyceraldehyde 3-phosphate</name>
        <dbReference type="ChEBI" id="CHEBI:59776"/>
    </ligand>
</feature>
<feature type="binding site" evidence="1">
    <location>
        <position position="316"/>
    </location>
    <ligand>
        <name>NAD(+)</name>
        <dbReference type="ChEBI" id="CHEBI:57540"/>
    </ligand>
</feature>
<feature type="site" description="Activates thiol group during catalysis" evidence="3">
    <location>
        <position position="179"/>
    </location>
</feature>
<accession>P15115</accession>
<proteinExistence type="evidence at protein level"/>
<keyword id="KW-0963">Cytoplasm</keyword>
<keyword id="KW-0903">Direct protein sequencing</keyword>
<keyword id="KW-0324">Glycolysis</keyword>
<keyword id="KW-0520">NAD</keyword>
<keyword id="KW-0547">Nucleotide-binding</keyword>
<keyword id="KW-0560">Oxidoreductase</keyword>
<protein>
    <recommendedName>
        <fullName evidence="1">Glyceraldehyde-3-phosphate dehydrogenase</fullName>
        <shortName evidence="1">GAPDH</shortName>
        <ecNumber evidence="2">1.2.1.12</ecNumber>
    </recommendedName>
    <alternativeName>
        <fullName evidence="1">NAD-dependent glyceraldehyde-3-phosphate dehydrogenase</fullName>
    </alternativeName>
</protein>
<comment type="function">
    <text evidence="1">Catalyzes the oxidative phosphorylation of glyceraldehyde 3-phosphate (G3P) to 1,3-bisphosphoglycerate (BPG) using the cofactor NAD. The first reaction step involves the formation of a hemiacetal intermediate between G3P and a cysteine residue, and this hemiacetal intermediate is then oxidized to a thioester, with concomitant reduction of NAD to NADH. The reduced NADH is then exchanged with the second NAD, and the thioester is attacked by a nucleophilic inorganic phosphate to produce BPG.</text>
</comment>
<comment type="catalytic activity">
    <reaction evidence="2">
        <text>D-glyceraldehyde 3-phosphate + phosphate + NAD(+) = (2R)-3-phospho-glyceroyl phosphate + NADH + H(+)</text>
        <dbReference type="Rhea" id="RHEA:10300"/>
        <dbReference type="ChEBI" id="CHEBI:15378"/>
        <dbReference type="ChEBI" id="CHEBI:43474"/>
        <dbReference type="ChEBI" id="CHEBI:57540"/>
        <dbReference type="ChEBI" id="CHEBI:57604"/>
        <dbReference type="ChEBI" id="CHEBI:57945"/>
        <dbReference type="ChEBI" id="CHEBI:59776"/>
        <dbReference type="EC" id="1.2.1.12"/>
    </reaction>
</comment>
<comment type="pathway">
    <text evidence="4">Carbohydrate degradation; glycolysis; pyruvate from D-glyceraldehyde 3-phosphate: step 1/5.</text>
</comment>
<comment type="subunit">
    <text evidence="1">Homotetramer.</text>
</comment>
<comment type="subcellular location">
    <subcellularLocation>
        <location evidence="4">Cytoplasm</location>
    </subcellularLocation>
</comment>
<comment type="similarity">
    <text evidence="4">Belongs to the glyceraldehyde-3-phosphate dehydrogenase family.</text>
</comment>